<organism>
    <name type="scientific">Streptococcus equi subsp. zooepidemicus (strain MGCS10565)</name>
    <dbReference type="NCBI Taxonomy" id="552526"/>
    <lineage>
        <taxon>Bacteria</taxon>
        <taxon>Bacillati</taxon>
        <taxon>Bacillota</taxon>
        <taxon>Bacilli</taxon>
        <taxon>Lactobacillales</taxon>
        <taxon>Streptococcaceae</taxon>
        <taxon>Streptococcus</taxon>
    </lineage>
</organism>
<name>FOLD_STREM</name>
<evidence type="ECO:0000255" key="1">
    <source>
        <dbReference type="HAMAP-Rule" id="MF_01576"/>
    </source>
</evidence>
<sequence length="284" mass="30890">MVQIIDGKALAQKMQAALAKKVESLKAEKGIVPGLVVILVGDNPASQVYVRNKERAALAAGFKSETVRLSDSVCQEELIELIEQYNQDDTIHGILVQLPLPHHINDKSIILAIDPKKDVDGFHPMNTGHLWSGRPNMVPCTPAGIMEMFRDYGIELEGKNAVIVGRSNIVGKPMAQLLLDKNATVTLTHSRTRQLAAICRRADILIVAIGQGHFITKDFVKEGAVVIDVGMNRDVNGRLIGDVAFDEVSELASMITPVPGGVGPMTITMLLEQTYQAALRRVSQ</sequence>
<feature type="chain" id="PRO_1000196806" description="Bifunctional protein FolD">
    <location>
        <begin position="1"/>
        <end position="284"/>
    </location>
</feature>
<feature type="binding site" evidence="1">
    <location>
        <begin position="165"/>
        <end position="167"/>
    </location>
    <ligand>
        <name>NADP(+)</name>
        <dbReference type="ChEBI" id="CHEBI:58349"/>
    </ligand>
</feature>
<feature type="binding site" evidence="1">
    <location>
        <position position="190"/>
    </location>
    <ligand>
        <name>NADP(+)</name>
        <dbReference type="ChEBI" id="CHEBI:58349"/>
    </ligand>
</feature>
<gene>
    <name evidence="1" type="primary">folD</name>
    <name type="ordered locus">Sez_0614</name>
</gene>
<dbReference type="EC" id="1.5.1.5" evidence="1"/>
<dbReference type="EC" id="3.5.4.9" evidence="1"/>
<dbReference type="EMBL" id="CP001129">
    <property type="protein sequence ID" value="ACG61981.1"/>
    <property type="molecule type" value="Genomic_DNA"/>
</dbReference>
<dbReference type="RefSeq" id="WP_012515257.1">
    <property type="nucleotide sequence ID" value="NC_011134.1"/>
</dbReference>
<dbReference type="SMR" id="B4U1W4"/>
<dbReference type="KEGG" id="sez:Sez_0614"/>
<dbReference type="HOGENOM" id="CLU_034045_2_1_9"/>
<dbReference type="UniPathway" id="UPA00193"/>
<dbReference type="Proteomes" id="UP000001873">
    <property type="component" value="Chromosome"/>
</dbReference>
<dbReference type="GO" id="GO:0005829">
    <property type="term" value="C:cytosol"/>
    <property type="evidence" value="ECO:0007669"/>
    <property type="project" value="TreeGrafter"/>
</dbReference>
<dbReference type="GO" id="GO:0004477">
    <property type="term" value="F:methenyltetrahydrofolate cyclohydrolase activity"/>
    <property type="evidence" value="ECO:0007669"/>
    <property type="project" value="UniProtKB-UniRule"/>
</dbReference>
<dbReference type="GO" id="GO:0004488">
    <property type="term" value="F:methylenetetrahydrofolate dehydrogenase (NADP+) activity"/>
    <property type="evidence" value="ECO:0007669"/>
    <property type="project" value="UniProtKB-UniRule"/>
</dbReference>
<dbReference type="GO" id="GO:0000105">
    <property type="term" value="P:L-histidine biosynthetic process"/>
    <property type="evidence" value="ECO:0007669"/>
    <property type="project" value="UniProtKB-KW"/>
</dbReference>
<dbReference type="GO" id="GO:0009086">
    <property type="term" value="P:methionine biosynthetic process"/>
    <property type="evidence" value="ECO:0007669"/>
    <property type="project" value="UniProtKB-KW"/>
</dbReference>
<dbReference type="GO" id="GO:0006164">
    <property type="term" value="P:purine nucleotide biosynthetic process"/>
    <property type="evidence" value="ECO:0007669"/>
    <property type="project" value="UniProtKB-KW"/>
</dbReference>
<dbReference type="GO" id="GO:0035999">
    <property type="term" value="P:tetrahydrofolate interconversion"/>
    <property type="evidence" value="ECO:0007669"/>
    <property type="project" value="UniProtKB-UniRule"/>
</dbReference>
<dbReference type="CDD" id="cd01080">
    <property type="entry name" value="NAD_bind_m-THF_DH_Cyclohyd"/>
    <property type="match status" value="1"/>
</dbReference>
<dbReference type="FunFam" id="3.40.50.720:FF:000094">
    <property type="entry name" value="Bifunctional protein FolD"/>
    <property type="match status" value="1"/>
</dbReference>
<dbReference type="FunFam" id="3.40.50.10860:FF:000005">
    <property type="entry name" value="C-1-tetrahydrofolate synthase, cytoplasmic, putative"/>
    <property type="match status" value="1"/>
</dbReference>
<dbReference type="Gene3D" id="3.40.50.10860">
    <property type="entry name" value="Leucine Dehydrogenase, chain A, domain 1"/>
    <property type="match status" value="1"/>
</dbReference>
<dbReference type="Gene3D" id="3.40.50.720">
    <property type="entry name" value="NAD(P)-binding Rossmann-like Domain"/>
    <property type="match status" value="1"/>
</dbReference>
<dbReference type="HAMAP" id="MF_01576">
    <property type="entry name" value="THF_DHG_CYH"/>
    <property type="match status" value="1"/>
</dbReference>
<dbReference type="InterPro" id="IPR046346">
    <property type="entry name" value="Aminoacid_DH-like_N_sf"/>
</dbReference>
<dbReference type="InterPro" id="IPR036291">
    <property type="entry name" value="NAD(P)-bd_dom_sf"/>
</dbReference>
<dbReference type="InterPro" id="IPR000672">
    <property type="entry name" value="THF_DH/CycHdrlase"/>
</dbReference>
<dbReference type="InterPro" id="IPR020630">
    <property type="entry name" value="THF_DH/CycHdrlase_cat_dom"/>
</dbReference>
<dbReference type="InterPro" id="IPR020867">
    <property type="entry name" value="THF_DH/CycHdrlase_CS"/>
</dbReference>
<dbReference type="InterPro" id="IPR020631">
    <property type="entry name" value="THF_DH/CycHdrlase_NAD-bd_dom"/>
</dbReference>
<dbReference type="NCBIfam" id="NF008058">
    <property type="entry name" value="PRK10792.1"/>
    <property type="match status" value="1"/>
</dbReference>
<dbReference type="NCBIfam" id="NF010776">
    <property type="entry name" value="PRK14179.1"/>
    <property type="match status" value="1"/>
</dbReference>
<dbReference type="NCBIfam" id="NF010783">
    <property type="entry name" value="PRK14186.1"/>
    <property type="match status" value="1"/>
</dbReference>
<dbReference type="NCBIfam" id="NF010785">
    <property type="entry name" value="PRK14188.1"/>
    <property type="match status" value="1"/>
</dbReference>
<dbReference type="PANTHER" id="PTHR48099:SF5">
    <property type="entry name" value="C-1-TETRAHYDROFOLATE SYNTHASE, CYTOPLASMIC"/>
    <property type="match status" value="1"/>
</dbReference>
<dbReference type="PANTHER" id="PTHR48099">
    <property type="entry name" value="C-1-TETRAHYDROFOLATE SYNTHASE, CYTOPLASMIC-RELATED"/>
    <property type="match status" value="1"/>
</dbReference>
<dbReference type="Pfam" id="PF00763">
    <property type="entry name" value="THF_DHG_CYH"/>
    <property type="match status" value="1"/>
</dbReference>
<dbReference type="Pfam" id="PF02882">
    <property type="entry name" value="THF_DHG_CYH_C"/>
    <property type="match status" value="1"/>
</dbReference>
<dbReference type="PRINTS" id="PR00085">
    <property type="entry name" value="THFDHDRGNASE"/>
</dbReference>
<dbReference type="SUPFAM" id="SSF53223">
    <property type="entry name" value="Aminoacid dehydrogenase-like, N-terminal domain"/>
    <property type="match status" value="1"/>
</dbReference>
<dbReference type="SUPFAM" id="SSF51735">
    <property type="entry name" value="NAD(P)-binding Rossmann-fold domains"/>
    <property type="match status" value="1"/>
</dbReference>
<dbReference type="PROSITE" id="PS00766">
    <property type="entry name" value="THF_DHG_CYH_1"/>
    <property type="match status" value="1"/>
</dbReference>
<dbReference type="PROSITE" id="PS00767">
    <property type="entry name" value="THF_DHG_CYH_2"/>
    <property type="match status" value="1"/>
</dbReference>
<comment type="function">
    <text evidence="1">Catalyzes the oxidation of 5,10-methylenetetrahydrofolate to 5,10-methenyltetrahydrofolate and then the hydrolysis of 5,10-methenyltetrahydrofolate to 10-formyltetrahydrofolate.</text>
</comment>
<comment type="catalytic activity">
    <reaction evidence="1">
        <text>(6R)-5,10-methylene-5,6,7,8-tetrahydrofolate + NADP(+) = (6R)-5,10-methenyltetrahydrofolate + NADPH</text>
        <dbReference type="Rhea" id="RHEA:22812"/>
        <dbReference type="ChEBI" id="CHEBI:15636"/>
        <dbReference type="ChEBI" id="CHEBI:57455"/>
        <dbReference type="ChEBI" id="CHEBI:57783"/>
        <dbReference type="ChEBI" id="CHEBI:58349"/>
        <dbReference type="EC" id="1.5.1.5"/>
    </reaction>
</comment>
<comment type="catalytic activity">
    <reaction evidence="1">
        <text>(6R)-5,10-methenyltetrahydrofolate + H2O = (6R)-10-formyltetrahydrofolate + H(+)</text>
        <dbReference type="Rhea" id="RHEA:23700"/>
        <dbReference type="ChEBI" id="CHEBI:15377"/>
        <dbReference type="ChEBI" id="CHEBI:15378"/>
        <dbReference type="ChEBI" id="CHEBI:57455"/>
        <dbReference type="ChEBI" id="CHEBI:195366"/>
        <dbReference type="EC" id="3.5.4.9"/>
    </reaction>
</comment>
<comment type="pathway">
    <text evidence="1">One-carbon metabolism; tetrahydrofolate interconversion.</text>
</comment>
<comment type="subunit">
    <text evidence="1">Homodimer.</text>
</comment>
<comment type="similarity">
    <text evidence="1">Belongs to the tetrahydrofolate dehydrogenase/cyclohydrolase family.</text>
</comment>
<accession>B4U1W4</accession>
<protein>
    <recommendedName>
        <fullName evidence="1">Bifunctional protein FolD</fullName>
    </recommendedName>
    <domain>
        <recommendedName>
            <fullName evidence="1">Methylenetetrahydrofolate dehydrogenase</fullName>
            <ecNumber evidence="1">1.5.1.5</ecNumber>
        </recommendedName>
    </domain>
    <domain>
        <recommendedName>
            <fullName evidence="1">Methenyltetrahydrofolate cyclohydrolase</fullName>
            <ecNumber evidence="1">3.5.4.9</ecNumber>
        </recommendedName>
    </domain>
</protein>
<proteinExistence type="inferred from homology"/>
<reference key="1">
    <citation type="journal article" date="2008" name="PLoS ONE">
        <title>Genome sequence of a lancefield group C Streptococcus zooepidemicus strain causing epidemic nephritis: new information about an old disease.</title>
        <authorList>
            <person name="Beres S.B."/>
            <person name="Sesso R."/>
            <person name="Pinto S.W.L."/>
            <person name="Hoe N.P."/>
            <person name="Porcella S.F."/>
            <person name="Deleo F.R."/>
            <person name="Musser J.M."/>
        </authorList>
    </citation>
    <scope>NUCLEOTIDE SEQUENCE [LARGE SCALE GENOMIC DNA]</scope>
    <source>
        <strain>MGCS10565</strain>
    </source>
</reference>
<keyword id="KW-0028">Amino-acid biosynthesis</keyword>
<keyword id="KW-0368">Histidine biosynthesis</keyword>
<keyword id="KW-0378">Hydrolase</keyword>
<keyword id="KW-0486">Methionine biosynthesis</keyword>
<keyword id="KW-0511">Multifunctional enzyme</keyword>
<keyword id="KW-0521">NADP</keyword>
<keyword id="KW-0554">One-carbon metabolism</keyword>
<keyword id="KW-0560">Oxidoreductase</keyword>
<keyword id="KW-0658">Purine biosynthesis</keyword>